<proteinExistence type="evidence at protein level"/>
<protein>
    <recommendedName>
        <fullName>Bcl2-associated agonist of cell death</fullName>
        <shortName>BAD</shortName>
    </recommendedName>
    <alternativeName>
        <fullName>Bcl-2-binding component 6</fullName>
    </alternativeName>
    <alternativeName>
        <fullName>Bcl-xL/Bcl-2-associated death promoter</fullName>
    </alternativeName>
    <alternativeName>
        <fullName>Bcl2 antagonist of cell death</fullName>
    </alternativeName>
</protein>
<feature type="chain" id="PRO_0000143105" description="Bcl2-associated agonist of cell death">
    <location>
        <begin position="1"/>
        <end position="205"/>
    </location>
</feature>
<feature type="region of interest" description="Disordered" evidence="4">
    <location>
        <begin position="1"/>
        <end position="139"/>
    </location>
</feature>
<feature type="region of interest" description="Disordered" evidence="4">
    <location>
        <begin position="161"/>
        <end position="180"/>
    </location>
</feature>
<feature type="short sequence motif" description="BH3">
    <location>
        <begin position="148"/>
        <end position="162"/>
    </location>
</feature>
<feature type="compositionally biased region" description="Polar residues" evidence="4">
    <location>
        <begin position="85"/>
        <end position="98"/>
    </location>
</feature>
<feature type="compositionally biased region" description="Acidic residues" evidence="4">
    <location>
        <begin position="118"/>
        <end position="128"/>
    </location>
</feature>
<feature type="modified residue" description="Phosphoserine" evidence="3">
    <location>
        <position position="67"/>
    </location>
</feature>
<feature type="modified residue" description="Phosphoserine" evidence="9">
    <location>
        <position position="113"/>
    </location>
</feature>
<feature type="modified residue" description="Phosphoserine" evidence="3">
    <location>
        <position position="129"/>
    </location>
</feature>
<feature type="modified residue" description="Asymmetric dimethylarginine; by PRMT1" evidence="3">
    <location>
        <position position="132"/>
    </location>
</feature>
<feature type="modified residue" description="Asymmetric dimethylarginine; by PRMT1" evidence="3">
    <location>
        <position position="134"/>
    </location>
</feature>
<feature type="modified residue" description="Phosphoserine" evidence="9">
    <location>
        <position position="135"/>
    </location>
</feature>
<feature type="modified residue" description="Phosphoserine; by PKA, PKB, PAK1, RPS6KA1, RPS6KB1 and PKC/PRKCQ" evidence="2">
    <location>
        <position position="137"/>
    </location>
</feature>
<feature type="modified residue" description="Phosphoserine" evidence="9">
    <location>
        <position position="156"/>
    </location>
</feature>
<feature type="modified residue" description="Phosphoserine" evidence="3">
    <location>
        <position position="171"/>
    </location>
</feature>
<feature type="splice variant" id="VSP_000534" description="In isoform Beta." evidence="7">
    <original>LPRPKSAGTATQMRQSASWTRIIQSWWDRNLGKGGSTPSQ</original>
    <variation>EELTYSVEFLPVRAIAMEGWPLLWSFQSFPHTLPPTPPEVAMFPLRYWTALRRLC</variation>
    <location>
        <begin position="166"/>
        <end position="205"/>
    </location>
</feature>
<feature type="mutagenesis site" description="No effect on heterodimerization with 14-3-3 proteins." evidence="6">
    <original>S</original>
    <variation>A</variation>
    <location>
        <position position="113"/>
    </location>
</feature>
<feature type="mutagenesis site" description="No heterodimerization with 14-3-3 proteins. No effect on heterodimerization with BCL2 nor with protein P11." evidence="6">
    <original>S</original>
    <variation>A</variation>
    <location>
        <position position="137"/>
    </location>
</feature>
<feature type="sequence conflict" description="In Ref. 1; AAC53374." evidence="8" ref="1">
    <original>SDAGGR</original>
    <variation>ERRGRK</variation>
    <location>
        <begin position="29"/>
        <end position="34"/>
    </location>
</feature>
<dbReference type="EMBL" id="AF003523">
    <property type="protein sequence ID" value="AAC53374.1"/>
    <property type="molecule type" value="mRNA"/>
</dbReference>
<dbReference type="EMBL" id="AF031227">
    <property type="protein sequence ID" value="AAC15100.1"/>
    <property type="molecule type" value="mRNA"/>
</dbReference>
<dbReference type="EMBL" id="AF279910">
    <property type="protein sequence ID" value="AAF91427.1"/>
    <property type="molecule type" value="mRNA"/>
</dbReference>
<dbReference type="EMBL" id="AF279911">
    <property type="protein sequence ID" value="AAF91428.1"/>
    <property type="molecule type" value="mRNA"/>
</dbReference>
<dbReference type="RefSeq" id="NP_073189.1">
    <molecule id="O35147-1"/>
    <property type="nucleotide sequence ID" value="NM_022698.2"/>
</dbReference>
<dbReference type="RefSeq" id="XP_006230958.1">
    <property type="nucleotide sequence ID" value="XM_006230896.3"/>
</dbReference>
<dbReference type="SMR" id="O35147"/>
<dbReference type="BioGRID" id="249177">
    <property type="interactions" value="3"/>
</dbReference>
<dbReference type="ComplexPortal" id="CPX-2020">
    <property type="entry name" value="BAD:BCL-2 complex"/>
</dbReference>
<dbReference type="ComplexPortal" id="CPX-2022">
    <property type="entry name" value="BAD:BCL-XL complex"/>
</dbReference>
<dbReference type="DIP" id="DIP-29862N"/>
<dbReference type="ELM" id="O35147"/>
<dbReference type="FunCoup" id="O35147">
    <property type="interactions" value="676"/>
</dbReference>
<dbReference type="IntAct" id="O35147">
    <property type="interactions" value="1"/>
</dbReference>
<dbReference type="STRING" id="10116.ENSRNOP00000028712"/>
<dbReference type="GlyGen" id="O35147">
    <property type="glycosylation" value="1 site, 1 O-linked glycan (1 site)"/>
</dbReference>
<dbReference type="iPTMnet" id="O35147"/>
<dbReference type="PhosphoSitePlus" id="O35147"/>
<dbReference type="PaxDb" id="10116-ENSRNOP00000061855"/>
<dbReference type="GeneID" id="64639"/>
<dbReference type="KEGG" id="rno:64639"/>
<dbReference type="UCSC" id="RGD:620103">
    <molecule id="O35147-1"/>
    <property type="organism name" value="rat"/>
</dbReference>
<dbReference type="AGR" id="RGD:620103"/>
<dbReference type="CTD" id="572"/>
<dbReference type="RGD" id="620103">
    <property type="gene designation" value="Bad"/>
</dbReference>
<dbReference type="VEuPathDB" id="HostDB:ENSRNOG00000021147"/>
<dbReference type="eggNOG" id="ENOG502S71H">
    <property type="taxonomic scope" value="Eukaryota"/>
</dbReference>
<dbReference type="HOGENOM" id="CLU_129052_0_0_1"/>
<dbReference type="InParanoid" id="O35147"/>
<dbReference type="PhylomeDB" id="O35147"/>
<dbReference type="TreeFam" id="TF102001"/>
<dbReference type="Reactome" id="R-RNO-111447">
    <property type="pathway name" value="Activation of BAD and translocation to mitochondria"/>
</dbReference>
<dbReference type="Reactome" id="R-RNO-111453">
    <property type="pathway name" value="BH3-only proteins associate with and inactivate anti-apoptotic BCL-2 members"/>
</dbReference>
<dbReference type="Reactome" id="R-RNO-193648">
    <property type="pathway name" value="NRAGE signals death through JNK"/>
</dbReference>
<dbReference type="PRO" id="PR:O35147"/>
<dbReference type="Proteomes" id="UP000002494">
    <property type="component" value="Chromosome 1"/>
</dbReference>
<dbReference type="Bgee" id="ENSRNOG00000021147">
    <property type="expression patterns" value="Expressed in stomach and 20 other cell types or tissues"/>
</dbReference>
<dbReference type="GO" id="GO:0097138">
    <property type="term" value="C:BAD-BCL-2 complex"/>
    <property type="evidence" value="ECO:0000266"/>
    <property type="project" value="RGD"/>
</dbReference>
<dbReference type="GO" id="GO:0005737">
    <property type="term" value="C:cytoplasm"/>
    <property type="evidence" value="ECO:0000266"/>
    <property type="project" value="RGD"/>
</dbReference>
<dbReference type="GO" id="GO:0005829">
    <property type="term" value="C:cytosol"/>
    <property type="evidence" value="ECO:0000314"/>
    <property type="project" value="RGD"/>
</dbReference>
<dbReference type="GO" id="GO:0005741">
    <property type="term" value="C:mitochondrial outer membrane"/>
    <property type="evidence" value="ECO:0000250"/>
    <property type="project" value="UniProtKB"/>
</dbReference>
<dbReference type="GO" id="GO:0005739">
    <property type="term" value="C:mitochondrion"/>
    <property type="evidence" value="ECO:0000314"/>
    <property type="project" value="RGD"/>
</dbReference>
<dbReference type="GO" id="GO:0071889">
    <property type="term" value="F:14-3-3 protein binding"/>
    <property type="evidence" value="ECO:0000314"/>
    <property type="project" value="RGD"/>
</dbReference>
<dbReference type="GO" id="GO:0140608">
    <property type="term" value="F:cysteine-type endopeptidase activator activity"/>
    <property type="evidence" value="ECO:0000250"/>
    <property type="project" value="UniProtKB"/>
</dbReference>
<dbReference type="GO" id="GO:0008656">
    <property type="term" value="F:cysteine-type endopeptidase activator activity involved in apoptotic process"/>
    <property type="evidence" value="ECO:0000266"/>
    <property type="project" value="RGD"/>
</dbReference>
<dbReference type="GO" id="GO:0008289">
    <property type="term" value="F:lipid binding"/>
    <property type="evidence" value="ECO:0000250"/>
    <property type="project" value="UniProtKB"/>
</dbReference>
<dbReference type="GO" id="GO:0005543">
    <property type="term" value="F:phospholipid binding"/>
    <property type="evidence" value="ECO:0000250"/>
    <property type="project" value="UniProtKB"/>
</dbReference>
<dbReference type="GO" id="GO:0043422">
    <property type="term" value="F:protein kinase B binding"/>
    <property type="evidence" value="ECO:0000353"/>
    <property type="project" value="RGD"/>
</dbReference>
<dbReference type="GO" id="GO:0019901">
    <property type="term" value="F:protein kinase binding"/>
    <property type="evidence" value="ECO:0000266"/>
    <property type="project" value="RGD"/>
</dbReference>
<dbReference type="GO" id="GO:0030346">
    <property type="term" value="F:protein phosphatase 2B binding"/>
    <property type="evidence" value="ECO:0000353"/>
    <property type="project" value="RGD"/>
</dbReference>
<dbReference type="GO" id="GO:0019903">
    <property type="term" value="F:protein phosphatase binding"/>
    <property type="evidence" value="ECO:0000266"/>
    <property type="project" value="RGD"/>
</dbReference>
<dbReference type="GO" id="GO:0046031">
    <property type="term" value="P:ADP metabolic process"/>
    <property type="evidence" value="ECO:0000250"/>
    <property type="project" value="UniProtKB"/>
</dbReference>
<dbReference type="GO" id="GO:0006915">
    <property type="term" value="P:apoptotic process"/>
    <property type="evidence" value="ECO:0000266"/>
    <property type="project" value="RGD"/>
</dbReference>
<dbReference type="GO" id="GO:0097190">
    <property type="term" value="P:apoptotic signaling pathway"/>
    <property type="evidence" value="ECO:0000266"/>
    <property type="project" value="RGD"/>
</dbReference>
<dbReference type="GO" id="GO:0046034">
    <property type="term" value="P:ATP metabolic process"/>
    <property type="evidence" value="ECO:0000250"/>
    <property type="project" value="UniProtKB"/>
</dbReference>
<dbReference type="GO" id="GO:0071247">
    <property type="term" value="P:cellular response to chromate"/>
    <property type="evidence" value="ECO:0000270"/>
    <property type="project" value="RGD"/>
</dbReference>
<dbReference type="GO" id="GO:0071456">
    <property type="term" value="P:cellular response to hypoxia"/>
    <property type="evidence" value="ECO:0000266"/>
    <property type="project" value="RGD"/>
</dbReference>
<dbReference type="GO" id="GO:0071396">
    <property type="term" value="P:cellular response to lipid"/>
    <property type="evidence" value="ECO:0000266"/>
    <property type="project" value="RGD"/>
</dbReference>
<dbReference type="GO" id="GO:0071260">
    <property type="term" value="P:cellular response to mechanical stimulus"/>
    <property type="evidence" value="ECO:0000266"/>
    <property type="project" value="RGD"/>
</dbReference>
<dbReference type="GO" id="GO:0071316">
    <property type="term" value="P:cellular response to nicotine"/>
    <property type="evidence" value="ECO:0000250"/>
    <property type="project" value="UniProtKB"/>
</dbReference>
<dbReference type="GO" id="GO:0021987">
    <property type="term" value="P:cerebral cortex development"/>
    <property type="evidence" value="ECO:0000270"/>
    <property type="project" value="RGD"/>
</dbReference>
<dbReference type="GO" id="GO:0019221">
    <property type="term" value="P:cytokine-mediated signaling pathway"/>
    <property type="evidence" value="ECO:0000266"/>
    <property type="project" value="RGD"/>
</dbReference>
<dbReference type="GO" id="GO:0050673">
    <property type="term" value="P:epithelial cell proliferation"/>
    <property type="evidence" value="ECO:0000266"/>
    <property type="project" value="RGD"/>
</dbReference>
<dbReference type="GO" id="GO:0097191">
    <property type="term" value="P:extrinsic apoptotic signaling pathway"/>
    <property type="evidence" value="ECO:0000266"/>
    <property type="project" value="RGD"/>
</dbReference>
<dbReference type="GO" id="GO:0097192">
    <property type="term" value="P:extrinsic apoptotic signaling pathway in absence of ligand"/>
    <property type="evidence" value="ECO:0000266"/>
    <property type="project" value="RGD"/>
</dbReference>
<dbReference type="GO" id="GO:0008625">
    <property type="term" value="P:extrinsic apoptotic signaling pathway via death domain receptors"/>
    <property type="evidence" value="ECO:0000266"/>
    <property type="project" value="RGD"/>
</dbReference>
<dbReference type="GO" id="GO:0006007">
    <property type="term" value="P:glucose catabolic process"/>
    <property type="evidence" value="ECO:0000266"/>
    <property type="project" value="RGD"/>
</dbReference>
<dbReference type="GO" id="GO:0042593">
    <property type="term" value="P:glucose homeostasis"/>
    <property type="evidence" value="ECO:0000250"/>
    <property type="project" value="UniProtKB"/>
</dbReference>
<dbReference type="GO" id="GO:0097193">
    <property type="term" value="P:intrinsic apoptotic signaling pathway"/>
    <property type="evidence" value="ECO:0000250"/>
    <property type="project" value="UniProtKB"/>
</dbReference>
<dbReference type="GO" id="GO:0008630">
    <property type="term" value="P:intrinsic apoptotic signaling pathway in response to DNA damage"/>
    <property type="evidence" value="ECO:0000266"/>
    <property type="project" value="RGD"/>
</dbReference>
<dbReference type="GO" id="GO:0043066">
    <property type="term" value="P:negative regulation of apoptotic process"/>
    <property type="evidence" value="ECO:0000250"/>
    <property type="project" value="UniProtKB"/>
</dbReference>
<dbReference type="GO" id="GO:0046931">
    <property type="term" value="P:pore complex assembly"/>
    <property type="evidence" value="ECO:0000250"/>
    <property type="project" value="UniProtKB"/>
</dbReference>
<dbReference type="GO" id="GO:0043065">
    <property type="term" value="P:positive regulation of apoptotic process"/>
    <property type="evidence" value="ECO:0000266"/>
    <property type="project" value="RGD"/>
</dbReference>
<dbReference type="GO" id="GO:0045579">
    <property type="term" value="P:positive regulation of B cell differentiation"/>
    <property type="evidence" value="ECO:0000266"/>
    <property type="project" value="RGD"/>
</dbReference>
<dbReference type="GO" id="GO:0050679">
    <property type="term" value="P:positive regulation of epithelial cell proliferation"/>
    <property type="evidence" value="ECO:0000250"/>
    <property type="project" value="UniProtKB"/>
</dbReference>
<dbReference type="GO" id="GO:1904710">
    <property type="term" value="P:positive regulation of granulosa cell apoptotic process"/>
    <property type="evidence" value="ECO:0000314"/>
    <property type="project" value="RGD"/>
</dbReference>
<dbReference type="GO" id="GO:0032024">
    <property type="term" value="P:positive regulation of insulin secretion"/>
    <property type="evidence" value="ECO:0000250"/>
    <property type="project" value="UniProtKB"/>
</dbReference>
<dbReference type="GO" id="GO:0035774">
    <property type="term" value="P:positive regulation of insulin secretion involved in cellular response to glucose stimulus"/>
    <property type="evidence" value="ECO:0000266"/>
    <property type="project" value="RGD"/>
</dbReference>
<dbReference type="GO" id="GO:1902220">
    <property type="term" value="P:positive regulation of intrinsic apoptotic signaling pathway in response to osmotic stress"/>
    <property type="evidence" value="ECO:0000266"/>
    <property type="project" value="RGD"/>
</dbReference>
<dbReference type="GO" id="GO:0010918">
    <property type="term" value="P:positive regulation of mitochondrial membrane potential"/>
    <property type="evidence" value="ECO:0000250"/>
    <property type="project" value="UniProtKB"/>
</dbReference>
<dbReference type="GO" id="GO:0045862">
    <property type="term" value="P:positive regulation of proteolysis"/>
    <property type="evidence" value="ECO:0000266"/>
    <property type="project" value="RGD"/>
</dbReference>
<dbReference type="GO" id="GO:0090200">
    <property type="term" value="P:positive regulation of release of cytochrome c from mitochondria"/>
    <property type="evidence" value="ECO:0000266"/>
    <property type="project" value="RGD"/>
</dbReference>
<dbReference type="GO" id="GO:0045582">
    <property type="term" value="P:positive regulation of T cell differentiation"/>
    <property type="evidence" value="ECO:0000266"/>
    <property type="project" value="RGD"/>
</dbReference>
<dbReference type="GO" id="GO:2000078">
    <property type="term" value="P:positive regulation of type B pancreatic cell development"/>
    <property type="evidence" value="ECO:0000250"/>
    <property type="project" value="UniProtKB"/>
</dbReference>
<dbReference type="GO" id="GO:0042981">
    <property type="term" value="P:regulation of apoptotic process"/>
    <property type="evidence" value="ECO:0000266"/>
    <property type="project" value="RGD"/>
</dbReference>
<dbReference type="GO" id="GO:0046902">
    <property type="term" value="P:regulation of mitochondrial membrane permeability"/>
    <property type="evidence" value="ECO:0000250"/>
    <property type="project" value="UniProtKB"/>
</dbReference>
<dbReference type="GO" id="GO:0001836">
    <property type="term" value="P:release of cytochrome c from mitochondria"/>
    <property type="evidence" value="ECO:0000266"/>
    <property type="project" value="RGD"/>
</dbReference>
<dbReference type="GO" id="GO:0043200">
    <property type="term" value="P:response to amino acid"/>
    <property type="evidence" value="ECO:0000270"/>
    <property type="project" value="RGD"/>
</dbReference>
<dbReference type="GO" id="GO:0072347">
    <property type="term" value="P:response to anesthetic"/>
    <property type="evidence" value="ECO:0000270"/>
    <property type="project" value="RGD"/>
</dbReference>
<dbReference type="GO" id="GO:1901423">
    <property type="term" value="P:response to benzene"/>
    <property type="evidence" value="ECO:0000270"/>
    <property type="project" value="RGD"/>
</dbReference>
<dbReference type="GO" id="GO:0051592">
    <property type="term" value="P:response to calcium ion"/>
    <property type="evidence" value="ECO:0000270"/>
    <property type="project" value="RGD"/>
</dbReference>
<dbReference type="GO" id="GO:0032355">
    <property type="term" value="P:response to estradiol"/>
    <property type="evidence" value="ECO:0000270"/>
    <property type="project" value="RGD"/>
</dbReference>
<dbReference type="GO" id="GO:0045471">
    <property type="term" value="P:response to ethanol"/>
    <property type="evidence" value="ECO:0000270"/>
    <property type="project" value="RGD"/>
</dbReference>
<dbReference type="GO" id="GO:0051384">
    <property type="term" value="P:response to glucocorticoid"/>
    <property type="evidence" value="ECO:0000270"/>
    <property type="project" value="RGD"/>
</dbReference>
<dbReference type="GO" id="GO:0009749">
    <property type="term" value="P:response to glucose"/>
    <property type="evidence" value="ECO:0000270"/>
    <property type="project" value="RGD"/>
</dbReference>
<dbReference type="GO" id="GO:0009725">
    <property type="term" value="P:response to hormone"/>
    <property type="evidence" value="ECO:0000270"/>
    <property type="project" value="RGD"/>
</dbReference>
<dbReference type="GO" id="GO:0042542">
    <property type="term" value="P:response to hydrogen peroxide"/>
    <property type="evidence" value="ECO:0000270"/>
    <property type="project" value="RGD"/>
</dbReference>
<dbReference type="GO" id="GO:0001666">
    <property type="term" value="P:response to hypoxia"/>
    <property type="evidence" value="ECO:0000270"/>
    <property type="project" value="RGD"/>
</dbReference>
<dbReference type="GO" id="GO:0034201">
    <property type="term" value="P:response to oleic acid"/>
    <property type="evidence" value="ECO:0000270"/>
    <property type="project" value="RGD"/>
</dbReference>
<dbReference type="GO" id="GO:0032570">
    <property type="term" value="P:response to progesterone"/>
    <property type="evidence" value="ECO:0000270"/>
    <property type="project" value="RGD"/>
</dbReference>
<dbReference type="GO" id="GO:0033574">
    <property type="term" value="P:response to testosterone"/>
    <property type="evidence" value="ECO:0000270"/>
    <property type="project" value="RGD"/>
</dbReference>
<dbReference type="GO" id="GO:1904567">
    <property type="term" value="P:response to wortmannin"/>
    <property type="evidence" value="ECO:0000270"/>
    <property type="project" value="RGD"/>
</dbReference>
<dbReference type="GO" id="GO:0009410">
    <property type="term" value="P:response to xenobiotic stimulus"/>
    <property type="evidence" value="ECO:0000270"/>
    <property type="project" value="RGD"/>
</dbReference>
<dbReference type="GO" id="GO:0007283">
    <property type="term" value="P:spermatogenesis"/>
    <property type="evidence" value="ECO:0000270"/>
    <property type="project" value="RGD"/>
</dbReference>
<dbReference type="GO" id="GO:0044342">
    <property type="term" value="P:type B pancreatic cell proliferation"/>
    <property type="evidence" value="ECO:0000250"/>
    <property type="project" value="UniProtKB"/>
</dbReference>
<dbReference type="InterPro" id="IPR018868">
    <property type="entry name" value="BAD"/>
</dbReference>
<dbReference type="PANTHER" id="PTHR28540">
    <property type="entry name" value="BCL2-ASSOCIATED AGONIST OF CELL DEATH"/>
    <property type="match status" value="1"/>
</dbReference>
<dbReference type="PANTHER" id="PTHR28540:SF1">
    <property type="entry name" value="BCL2-ASSOCIATED AGONIST OF CELL DEATH"/>
    <property type="match status" value="1"/>
</dbReference>
<dbReference type="Pfam" id="PF10514">
    <property type="entry name" value="Bcl-2_BAD"/>
    <property type="match status" value="1"/>
</dbReference>
<keyword id="KW-0025">Alternative splicing</keyword>
<keyword id="KW-0053">Apoptosis</keyword>
<keyword id="KW-0963">Cytoplasm</keyword>
<keyword id="KW-0472">Membrane</keyword>
<keyword id="KW-0488">Methylation</keyword>
<keyword id="KW-0496">Mitochondrion</keyword>
<keyword id="KW-1000">Mitochondrion outer membrane</keyword>
<keyword id="KW-0597">Phosphoprotein</keyword>
<keyword id="KW-1185">Reference proteome</keyword>
<sequence length="205" mass="22228">MGTPKQPSLAPAHALGLRKSDPGIRSLGSDAGGRRWRPAAQSMFQIPEFEPSEQEDASTTDRGLGPSLTEDQPGPYLAPGLLGSIVQQQPGQAANNSHHGGAGTMETRSRHSSYPAGTEEDEGMEEELSPFRGRSRSAPPNLWAAQRYGRELRRMSDEFEGSFKGLPRPKSAGTATQMRQSASWTRIIQSWWDRNLGKGGSTPSQ</sequence>
<comment type="function">
    <text evidence="1">Promotes cell death. Successfully competes for the binding to Bcl-X(L), Bcl-2 and Bcl-W, thereby affecting the level of heterodimerization of these proteins with BAX. Can reverse the death repressor activity of Bcl-X(L), but not that of Bcl-2 (By similarity). Appears to act as a link between growth factor receptor signaling and the apoptotic pathways.</text>
</comment>
<comment type="subunit">
    <text evidence="2 5">Forms heterodimers with the anti-apoptotic proteins, Bcl-X(L), Bcl-2 and Bcl-W. Also binds protein S100A10. The Ser-113/Ser-137 phosphorylated form binds 14-3-3 proteins. Interacts with AKT1 and PIM3 (By similarity). Interacts with HIF3A (via C-terminus domain); the interaction reduces the binding between BAD and BAX (By similarity). Interacts (via BH3 domain) with NOL3 (via CARD domain); preventing the association of BAD with BCL2 (PubMed:17998337). Interacts with GIMAP3/IAN4 and GIMAP5/IAN5 (By similarity).</text>
</comment>
<comment type="subcellular location">
    <subcellularLocation>
        <location>Mitochondrion outer membrane</location>
    </subcellularLocation>
    <subcellularLocation>
        <location evidence="2">Cytoplasm</location>
    </subcellularLocation>
    <text evidence="2">Colocalizes with HIF3A in the cytoplasm. Upon phosphorylation, locates to the cytoplasm.</text>
</comment>
<comment type="alternative products">
    <event type="alternative splicing"/>
    <isoform>
        <id>O35147-1</id>
        <name>Alpha</name>
        <sequence type="displayed"/>
    </isoform>
    <isoform>
        <id>O35147-2</id>
        <name>Beta</name>
        <sequence type="described" ref="VSP_000534"/>
    </isoform>
</comment>
<comment type="tissue specificity">
    <text>Expressed in all tissues tested, including brain, liver, spleen and heart. In the brain, restricted to epithelial cells of the choroid plexus. Isoform alpha is the more abundant form.</text>
</comment>
<comment type="domain">
    <text>Intact BH3 motif is required by BIK, BID, BAK, BAD and BAX for their pro-apoptotic activity and for their interaction with anti-apoptotic members of the Bcl-2 family.</text>
</comment>
<comment type="PTM">
    <text>Phosphorylated at one or more of Ser-113, Ser-137, Ser-156 and Ser-171 in response to survival stimuli, which blocks its pro-apoptotic activity. Phosphorylation on Ser-137 or Ser-113 promotes heterodimerization with 14-3-3 proteins. This interaction then facilitates the phosphorylation at Ser-156, a site within the BH3 motif, leading to the release of Bcl-X(L) and the promotion of cell survival. Ser-137 is the major site of AKT/PKB phosphorylation, Ser-156 the major site of protein kinase A (CAPK) phosphorylation.</text>
</comment>
<comment type="PTM">
    <text evidence="1">Methylation at Arg-132 and Arg-134 by PRMT1 inhibits Akt-mediated phosphorylation at Ser-137.</text>
</comment>
<comment type="similarity">
    <text evidence="8">Belongs to the Bcl-2 family.</text>
</comment>
<comment type="caution">
    <text evidence="8">The protein name 'Bcl2 antagonist of cell death' may be misleading. The protein antagonises Bcl2-mediated repression of cell death, hence it promotes apoptosis.</text>
</comment>
<accession>O35147</accession>
<accession>O70256</accession>
<accession>Q9JHX1</accession>
<name>BAD_RAT</name>
<evidence type="ECO:0000250" key="1"/>
<evidence type="ECO:0000250" key="2">
    <source>
        <dbReference type="UniProtKB" id="Q61337"/>
    </source>
</evidence>
<evidence type="ECO:0000250" key="3">
    <source>
        <dbReference type="UniProtKB" id="Q92934"/>
    </source>
</evidence>
<evidence type="ECO:0000256" key="4">
    <source>
        <dbReference type="SAM" id="MobiDB-lite"/>
    </source>
</evidence>
<evidence type="ECO:0000269" key="5">
    <source>
    </source>
</evidence>
<evidence type="ECO:0000269" key="6">
    <source>
    </source>
</evidence>
<evidence type="ECO:0000303" key="7">
    <source>
    </source>
</evidence>
<evidence type="ECO:0000305" key="8"/>
<evidence type="ECO:0007744" key="9">
    <source>
    </source>
</evidence>
<gene>
    <name type="primary">Bad</name>
</gene>
<organism>
    <name type="scientific">Rattus norvegicus</name>
    <name type="common">Rat</name>
    <dbReference type="NCBI Taxonomy" id="10116"/>
    <lineage>
        <taxon>Eukaryota</taxon>
        <taxon>Metazoa</taxon>
        <taxon>Chordata</taxon>
        <taxon>Craniata</taxon>
        <taxon>Vertebrata</taxon>
        <taxon>Euteleostomi</taxon>
        <taxon>Mammalia</taxon>
        <taxon>Eutheria</taxon>
        <taxon>Euarchontoglires</taxon>
        <taxon>Glires</taxon>
        <taxon>Rodentia</taxon>
        <taxon>Myomorpha</taxon>
        <taxon>Muroidea</taxon>
        <taxon>Muridae</taxon>
        <taxon>Murinae</taxon>
        <taxon>Rattus</taxon>
    </lineage>
</organism>
<reference key="1">
    <citation type="journal article" date="1997" name="Mol. Endocrinol.">
        <title>Interference of BAD (Bcl-xL/Bcl-2-associated death promoter)-induced apoptosis in mammalian cells by 14-3-3 isoforms and P11.</title>
        <authorList>
            <person name="Hsu S.Y."/>
            <person name="Kaipia A."/>
            <person name="Zhu L."/>
            <person name="Hsueh A.J.W."/>
        </authorList>
    </citation>
    <scope>NUCLEOTIDE SEQUENCE [MRNA]</scope>
    <scope>MUTAGENESIS OF SER-113 AND SER-137</scope>
    <source>
        <tissue>Ovary</tissue>
    </source>
</reference>
<reference key="2">
    <citation type="journal article" date="1998" name="Neurosci. Lett.">
        <title>Cloning and expression of the programmed cell death regulator BAD in the rat brain.</title>
        <authorList>
            <person name="D'Agata V."/>
            <person name="Magro G."/>
            <person name="Travali S."/>
            <person name="Musco S."/>
            <person name="Cavallaro S."/>
        </authorList>
    </citation>
    <scope>NUCLEOTIDE SEQUENCE [MRNA]</scope>
    <source>
        <tissue>Brain</tissue>
    </source>
</reference>
<reference key="3">
    <citation type="journal article" date="2001" name="Mol. Cell. Neurosci.">
        <title>Functional characterization of two splice variants of rat BAD and their interaction with Bcl-w in sympathetic neurons.</title>
        <authorList>
            <person name="Hamner S."/>
            <person name="Arumae U."/>
            <person name="Yu L.-Y."/>
            <person name="Sun Y.-F."/>
            <person name="Saarma M."/>
            <person name="Lindholm D."/>
        </authorList>
    </citation>
    <scope>NUCLEOTIDE SEQUENCE [MRNA] (ISOFORMS ALPHA AND BETA)</scope>
    <source>
        <tissue>Brain</tissue>
    </source>
</reference>
<reference key="4">
    <citation type="journal article" date="2008" name="Mol. Cell. Biol.">
        <title>p53 initiates apoptosis by transcriptionally targeting the antiapoptotic protein ARC.</title>
        <authorList>
            <person name="Li Y.Z."/>
            <person name="Lu D.Y."/>
            <person name="Tan W.Q."/>
            <person name="Wang J.X."/>
            <person name="Li P.F."/>
        </authorList>
    </citation>
    <scope>INTERACTION WITH NOL3</scope>
</reference>
<reference key="5">
    <citation type="journal article" date="2012" name="Nat. Commun.">
        <title>Quantitative maps of protein phosphorylation sites across 14 different rat organs and tissues.</title>
        <authorList>
            <person name="Lundby A."/>
            <person name="Secher A."/>
            <person name="Lage K."/>
            <person name="Nordsborg N.B."/>
            <person name="Dmytriyev A."/>
            <person name="Lundby C."/>
            <person name="Olsen J.V."/>
        </authorList>
    </citation>
    <scope>PHOSPHORYLATION [LARGE SCALE ANALYSIS] AT SER-113; SER-135 AND SER-156</scope>
    <scope>IDENTIFICATION BY MASS SPECTROMETRY [LARGE SCALE ANALYSIS]</scope>
</reference>